<name>RS13_PELPB</name>
<reference key="1">
    <citation type="submission" date="2008-06" db="EMBL/GenBank/DDBJ databases">
        <title>Complete sequence of Pelodictyon phaeoclathratiforme BU-1.</title>
        <authorList>
            <consortium name="US DOE Joint Genome Institute"/>
            <person name="Lucas S."/>
            <person name="Copeland A."/>
            <person name="Lapidus A."/>
            <person name="Glavina del Rio T."/>
            <person name="Dalin E."/>
            <person name="Tice H."/>
            <person name="Bruce D."/>
            <person name="Goodwin L."/>
            <person name="Pitluck S."/>
            <person name="Schmutz J."/>
            <person name="Larimer F."/>
            <person name="Land M."/>
            <person name="Hauser L."/>
            <person name="Kyrpides N."/>
            <person name="Mikhailova N."/>
            <person name="Liu Z."/>
            <person name="Li T."/>
            <person name="Zhao F."/>
            <person name="Overmann J."/>
            <person name="Bryant D.A."/>
            <person name="Richardson P."/>
        </authorList>
    </citation>
    <scope>NUCLEOTIDE SEQUENCE [LARGE SCALE GENOMIC DNA]</scope>
    <source>
        <strain>DSM 5477 / BU-1</strain>
    </source>
</reference>
<keyword id="KW-1185">Reference proteome</keyword>
<keyword id="KW-0687">Ribonucleoprotein</keyword>
<keyword id="KW-0689">Ribosomal protein</keyword>
<keyword id="KW-0694">RNA-binding</keyword>
<keyword id="KW-0699">rRNA-binding</keyword>
<keyword id="KW-0820">tRNA-binding</keyword>
<proteinExistence type="inferred from homology"/>
<organism>
    <name type="scientific">Pelodictyon phaeoclathratiforme (strain DSM 5477 / BU-1)</name>
    <dbReference type="NCBI Taxonomy" id="324925"/>
    <lineage>
        <taxon>Bacteria</taxon>
        <taxon>Pseudomonadati</taxon>
        <taxon>Chlorobiota</taxon>
        <taxon>Chlorobiia</taxon>
        <taxon>Chlorobiales</taxon>
        <taxon>Chlorobiaceae</taxon>
        <taxon>Chlorobium/Pelodictyon group</taxon>
        <taxon>Pelodictyon</taxon>
    </lineage>
</organism>
<protein>
    <recommendedName>
        <fullName evidence="1">Small ribosomal subunit protein uS13</fullName>
    </recommendedName>
    <alternativeName>
        <fullName evidence="3">30S ribosomal protein S13</fullName>
    </alternativeName>
</protein>
<feature type="chain" id="PRO_1000141297" description="Small ribosomal subunit protein uS13">
    <location>
        <begin position="1"/>
        <end position="125"/>
    </location>
</feature>
<feature type="region of interest" description="Disordered" evidence="2">
    <location>
        <begin position="92"/>
        <end position="125"/>
    </location>
</feature>
<sequence>MRIAGVNLPLNKHAVIALTHVYGIGRASAESILQRAGIAPNRKISELNDEEAHAIREIIAEQYKVEGQARGEQQTAIKRLMDIGCYRGLRHRRSLPVRGQRTRTNARTRKGKRKTVAGKKKAVKK</sequence>
<evidence type="ECO:0000255" key="1">
    <source>
        <dbReference type="HAMAP-Rule" id="MF_01315"/>
    </source>
</evidence>
<evidence type="ECO:0000256" key="2">
    <source>
        <dbReference type="SAM" id="MobiDB-lite"/>
    </source>
</evidence>
<evidence type="ECO:0000305" key="3"/>
<dbReference type="EMBL" id="CP001110">
    <property type="protein sequence ID" value="ACF42646.1"/>
    <property type="molecule type" value="Genomic_DNA"/>
</dbReference>
<dbReference type="RefSeq" id="WP_012507141.1">
    <property type="nucleotide sequence ID" value="NC_011060.1"/>
</dbReference>
<dbReference type="SMR" id="B4SBX1"/>
<dbReference type="STRING" id="324925.Ppha_0313"/>
<dbReference type="KEGG" id="pph:Ppha_0313"/>
<dbReference type="eggNOG" id="COG0099">
    <property type="taxonomic scope" value="Bacteria"/>
</dbReference>
<dbReference type="HOGENOM" id="CLU_103849_1_2_10"/>
<dbReference type="OrthoDB" id="9803610at2"/>
<dbReference type="Proteomes" id="UP000002724">
    <property type="component" value="Chromosome"/>
</dbReference>
<dbReference type="GO" id="GO:0005829">
    <property type="term" value="C:cytosol"/>
    <property type="evidence" value="ECO:0007669"/>
    <property type="project" value="TreeGrafter"/>
</dbReference>
<dbReference type="GO" id="GO:0015935">
    <property type="term" value="C:small ribosomal subunit"/>
    <property type="evidence" value="ECO:0007669"/>
    <property type="project" value="TreeGrafter"/>
</dbReference>
<dbReference type="GO" id="GO:0019843">
    <property type="term" value="F:rRNA binding"/>
    <property type="evidence" value="ECO:0007669"/>
    <property type="project" value="UniProtKB-UniRule"/>
</dbReference>
<dbReference type="GO" id="GO:0003735">
    <property type="term" value="F:structural constituent of ribosome"/>
    <property type="evidence" value="ECO:0007669"/>
    <property type="project" value="InterPro"/>
</dbReference>
<dbReference type="GO" id="GO:0000049">
    <property type="term" value="F:tRNA binding"/>
    <property type="evidence" value="ECO:0007669"/>
    <property type="project" value="UniProtKB-UniRule"/>
</dbReference>
<dbReference type="GO" id="GO:0006412">
    <property type="term" value="P:translation"/>
    <property type="evidence" value="ECO:0007669"/>
    <property type="project" value="UniProtKB-UniRule"/>
</dbReference>
<dbReference type="FunFam" id="1.10.8.50:FF:000001">
    <property type="entry name" value="30S ribosomal protein S13"/>
    <property type="match status" value="1"/>
</dbReference>
<dbReference type="FunFam" id="4.10.910.10:FF:000001">
    <property type="entry name" value="30S ribosomal protein S13"/>
    <property type="match status" value="1"/>
</dbReference>
<dbReference type="Gene3D" id="1.10.8.50">
    <property type="match status" value="1"/>
</dbReference>
<dbReference type="Gene3D" id="4.10.910.10">
    <property type="entry name" value="30s ribosomal protein s13, domain 2"/>
    <property type="match status" value="1"/>
</dbReference>
<dbReference type="HAMAP" id="MF_01315">
    <property type="entry name" value="Ribosomal_uS13"/>
    <property type="match status" value="1"/>
</dbReference>
<dbReference type="InterPro" id="IPR027437">
    <property type="entry name" value="Rbsml_uS13_C"/>
</dbReference>
<dbReference type="InterPro" id="IPR001892">
    <property type="entry name" value="Ribosomal_uS13"/>
</dbReference>
<dbReference type="InterPro" id="IPR010979">
    <property type="entry name" value="Ribosomal_uS13-like_H2TH"/>
</dbReference>
<dbReference type="InterPro" id="IPR019980">
    <property type="entry name" value="Ribosomal_uS13_bac-type"/>
</dbReference>
<dbReference type="InterPro" id="IPR018269">
    <property type="entry name" value="Ribosomal_uS13_CS"/>
</dbReference>
<dbReference type="NCBIfam" id="TIGR03631">
    <property type="entry name" value="uS13_bact"/>
    <property type="match status" value="1"/>
</dbReference>
<dbReference type="PANTHER" id="PTHR10871">
    <property type="entry name" value="30S RIBOSOMAL PROTEIN S13/40S RIBOSOMAL PROTEIN S18"/>
    <property type="match status" value="1"/>
</dbReference>
<dbReference type="PANTHER" id="PTHR10871:SF1">
    <property type="entry name" value="SMALL RIBOSOMAL SUBUNIT PROTEIN US13M"/>
    <property type="match status" value="1"/>
</dbReference>
<dbReference type="Pfam" id="PF00416">
    <property type="entry name" value="Ribosomal_S13"/>
    <property type="match status" value="1"/>
</dbReference>
<dbReference type="PIRSF" id="PIRSF002134">
    <property type="entry name" value="Ribosomal_S13"/>
    <property type="match status" value="1"/>
</dbReference>
<dbReference type="SUPFAM" id="SSF46946">
    <property type="entry name" value="S13-like H2TH domain"/>
    <property type="match status" value="1"/>
</dbReference>
<dbReference type="PROSITE" id="PS00646">
    <property type="entry name" value="RIBOSOMAL_S13_1"/>
    <property type="match status" value="1"/>
</dbReference>
<dbReference type="PROSITE" id="PS50159">
    <property type="entry name" value="RIBOSOMAL_S13_2"/>
    <property type="match status" value="1"/>
</dbReference>
<accession>B4SBX1</accession>
<gene>
    <name evidence="1" type="primary">rpsM</name>
    <name type="ordered locus">Ppha_0313</name>
</gene>
<comment type="function">
    <text evidence="1">Located at the top of the head of the 30S subunit, it contacts several helices of the 16S rRNA. In the 70S ribosome it contacts the 23S rRNA (bridge B1a) and protein L5 of the 50S subunit (bridge B1b), connecting the 2 subunits; these bridges are implicated in subunit movement. Contacts the tRNAs in the A and P-sites.</text>
</comment>
<comment type="subunit">
    <text evidence="1">Part of the 30S ribosomal subunit. Forms a loose heterodimer with protein S19. Forms two bridges to the 50S subunit in the 70S ribosome.</text>
</comment>
<comment type="similarity">
    <text evidence="1">Belongs to the universal ribosomal protein uS13 family.</text>
</comment>